<keyword id="KW-0998">Cell outer membrane</keyword>
<keyword id="KW-0134">Cell wall</keyword>
<keyword id="KW-0175">Coiled coil</keyword>
<keyword id="KW-0449">Lipoprotein</keyword>
<keyword id="KW-0472">Membrane</keyword>
<keyword id="KW-0564">Palmitate</keyword>
<keyword id="KW-0572">Peptidoglycan-anchor</keyword>
<keyword id="KW-1185">Reference proteome</keyword>
<keyword id="KW-0677">Repeat</keyword>
<keyword id="KW-0964">Secreted</keyword>
<keyword id="KW-0732">Signal</keyword>
<gene>
    <name evidence="1" type="primary">lpp</name>
    <name type="ordered locus">Z2705</name>
    <name type="ordered locus">ECs2384</name>
</gene>
<comment type="function">
    <text evidence="1">A highly abundant outer membrane lipoprotein that controls the distance between the inner and outer membranes. The only protein known to be covalently linked to the peptidoglycan network (PGN). Also non-covalently binds the PGN. The link between the cell outer membrane and PGN contributes to maintenance of the structural and functional integrity of the cell envelope, and maintains the correct distance between the PGN and the outer membrane.</text>
</comment>
<comment type="subunit">
    <text evidence="1">Homotrimer.</text>
</comment>
<comment type="subcellular location">
    <subcellularLocation>
        <location evidence="1">Cell outer membrane</location>
        <topology evidence="1">Lipid-anchor</topology>
        <orientation evidence="1">Periplasmic side</orientation>
    </subcellularLocation>
    <subcellularLocation>
        <location evidence="1">Secreted</location>
        <location evidence="1">Cell wall</location>
        <topology evidence="1">Peptidoglycan-anchor</topology>
    </subcellularLocation>
    <text evidence="1">Attached via its lipidated N-terminus to the inner leaflet of the outer membrane. Attached to the peptidoglycan network (PGN) via its C-terminus.</text>
</comment>
<comment type="similarity">
    <text evidence="1">Belongs to the Lpp family.</text>
</comment>
<dbReference type="EMBL" id="AE005174">
    <property type="protein sequence ID" value="AAG56664.1"/>
    <property type="molecule type" value="Genomic_DNA"/>
</dbReference>
<dbReference type="EMBL" id="BA000007">
    <property type="protein sequence ID" value="BAB35807.1"/>
    <property type="molecule type" value="Genomic_DNA"/>
</dbReference>
<dbReference type="PIR" id="D85775">
    <property type="entry name" value="D85775"/>
</dbReference>
<dbReference type="PIR" id="H90926">
    <property type="entry name" value="H90926"/>
</dbReference>
<dbReference type="RefSeq" id="NP_310411.1">
    <property type="nucleotide sequence ID" value="NC_002695.1"/>
</dbReference>
<dbReference type="RefSeq" id="WP_000648420.1">
    <property type="nucleotide sequence ID" value="NZ_VOAI01000007.1"/>
</dbReference>
<dbReference type="SMR" id="P69778"/>
<dbReference type="STRING" id="155864.Z2705"/>
<dbReference type="GeneID" id="912531"/>
<dbReference type="GeneID" id="93775832"/>
<dbReference type="KEGG" id="ece:Z2705"/>
<dbReference type="KEGG" id="ecs:ECs_2384"/>
<dbReference type="PATRIC" id="fig|386585.9.peg.2497"/>
<dbReference type="eggNOG" id="COG4238">
    <property type="taxonomic scope" value="Bacteria"/>
</dbReference>
<dbReference type="HOGENOM" id="CLU_166934_2_1_6"/>
<dbReference type="OMA" id="ANDRIDN"/>
<dbReference type="Proteomes" id="UP000000558">
    <property type="component" value="Chromosome"/>
</dbReference>
<dbReference type="Proteomes" id="UP000002519">
    <property type="component" value="Chromosome"/>
</dbReference>
<dbReference type="GO" id="GO:0009279">
    <property type="term" value="C:cell outer membrane"/>
    <property type="evidence" value="ECO:0007669"/>
    <property type="project" value="UniProtKB-SubCell"/>
</dbReference>
<dbReference type="GO" id="GO:0005576">
    <property type="term" value="C:extracellular region"/>
    <property type="evidence" value="ECO:0007669"/>
    <property type="project" value="UniProtKB-KW"/>
</dbReference>
<dbReference type="GO" id="GO:0008289">
    <property type="term" value="F:lipid binding"/>
    <property type="evidence" value="ECO:0007669"/>
    <property type="project" value="UniProtKB-UniRule"/>
</dbReference>
<dbReference type="GO" id="GO:0042834">
    <property type="term" value="F:peptidoglycan binding"/>
    <property type="evidence" value="ECO:0007669"/>
    <property type="project" value="UniProtKB-UniRule"/>
</dbReference>
<dbReference type="GO" id="GO:0030258">
    <property type="term" value="P:lipid modification"/>
    <property type="evidence" value="ECO:0007669"/>
    <property type="project" value="UniProtKB-UniRule"/>
</dbReference>
<dbReference type="GO" id="GO:0043580">
    <property type="term" value="P:periplasmic space organization"/>
    <property type="evidence" value="ECO:0007669"/>
    <property type="project" value="UniProtKB-UniRule"/>
</dbReference>
<dbReference type="FunFam" id="1.20.5.190:FF:000002">
    <property type="entry name" value="Major outer membrane lipoprotein"/>
    <property type="match status" value="1"/>
</dbReference>
<dbReference type="Gene3D" id="1.20.5.190">
    <property type="match status" value="1"/>
</dbReference>
<dbReference type="HAMAP" id="MF_00843">
    <property type="entry name" value="Lpp"/>
    <property type="match status" value="1"/>
</dbReference>
<dbReference type="InterPro" id="IPR006817">
    <property type="entry name" value="Lipoprotein_leucine-zipper_dom"/>
</dbReference>
<dbReference type="InterPro" id="IPR016367">
    <property type="entry name" value="MOM_Lpp"/>
</dbReference>
<dbReference type="NCBIfam" id="NF040598">
    <property type="entry name" value="Ala_zip_lipo"/>
    <property type="match status" value="1"/>
</dbReference>
<dbReference type="NCBIfam" id="NF011925">
    <property type="entry name" value="PRK15396.1"/>
    <property type="match status" value="1"/>
</dbReference>
<dbReference type="PANTHER" id="PTHR38763:SF1">
    <property type="entry name" value="MAJOR OUTER MEMBRANE LIPOPROTEIN LPP"/>
    <property type="match status" value="1"/>
</dbReference>
<dbReference type="PANTHER" id="PTHR38763">
    <property type="entry name" value="MAJOR OUTER MEMBRANE PROLIPOPROTEIN LPP"/>
    <property type="match status" value="1"/>
</dbReference>
<dbReference type="Pfam" id="PF04728">
    <property type="entry name" value="LPP"/>
    <property type="match status" value="1"/>
</dbReference>
<dbReference type="PIRSF" id="PIRSF002855">
    <property type="entry name" value="Murein-lipoprotein"/>
    <property type="match status" value="1"/>
</dbReference>
<dbReference type="SUPFAM" id="SSF58042">
    <property type="entry name" value="Outer membrane lipoprotein"/>
    <property type="match status" value="1"/>
</dbReference>
<dbReference type="PROSITE" id="PS51257">
    <property type="entry name" value="PROKAR_LIPOPROTEIN"/>
    <property type="match status" value="1"/>
</dbReference>
<reference key="1">
    <citation type="journal article" date="2001" name="Nature">
        <title>Genome sequence of enterohaemorrhagic Escherichia coli O157:H7.</title>
        <authorList>
            <person name="Perna N.T."/>
            <person name="Plunkett G. III"/>
            <person name="Burland V."/>
            <person name="Mau B."/>
            <person name="Glasner J.D."/>
            <person name="Rose D.J."/>
            <person name="Mayhew G.F."/>
            <person name="Evans P.S."/>
            <person name="Gregor J."/>
            <person name="Kirkpatrick H.A."/>
            <person name="Posfai G."/>
            <person name="Hackett J."/>
            <person name="Klink S."/>
            <person name="Boutin A."/>
            <person name="Shao Y."/>
            <person name="Miller L."/>
            <person name="Grotbeck E.J."/>
            <person name="Davis N.W."/>
            <person name="Lim A."/>
            <person name="Dimalanta E.T."/>
            <person name="Potamousis K."/>
            <person name="Apodaca J."/>
            <person name="Anantharaman T.S."/>
            <person name="Lin J."/>
            <person name="Yen G."/>
            <person name="Schwartz D.C."/>
            <person name="Welch R.A."/>
            <person name="Blattner F.R."/>
        </authorList>
    </citation>
    <scope>NUCLEOTIDE SEQUENCE [LARGE SCALE GENOMIC DNA]</scope>
    <source>
        <strain>O157:H7 / EDL933 / ATCC 700927 / EHEC</strain>
    </source>
</reference>
<reference key="2">
    <citation type="journal article" date="2001" name="DNA Res.">
        <title>Complete genome sequence of enterohemorrhagic Escherichia coli O157:H7 and genomic comparison with a laboratory strain K-12.</title>
        <authorList>
            <person name="Hayashi T."/>
            <person name="Makino K."/>
            <person name="Ohnishi M."/>
            <person name="Kurokawa K."/>
            <person name="Ishii K."/>
            <person name="Yokoyama K."/>
            <person name="Han C.-G."/>
            <person name="Ohtsubo E."/>
            <person name="Nakayama K."/>
            <person name="Murata T."/>
            <person name="Tanaka M."/>
            <person name="Tobe T."/>
            <person name="Iida T."/>
            <person name="Takami H."/>
            <person name="Honda T."/>
            <person name="Sasakawa C."/>
            <person name="Ogasawara N."/>
            <person name="Yasunaga T."/>
            <person name="Kuhara S."/>
            <person name="Shiba T."/>
            <person name="Hattori M."/>
            <person name="Shinagawa H."/>
        </authorList>
    </citation>
    <scope>NUCLEOTIDE SEQUENCE [LARGE SCALE GENOMIC DNA]</scope>
    <source>
        <strain>O157:H7 / Sakai / RIMD 0509952 / EHEC</strain>
    </source>
</reference>
<feature type="signal peptide" evidence="1">
    <location>
        <begin position="1"/>
        <end position="20"/>
    </location>
</feature>
<feature type="chain" id="PRO_0000018332" description="Major outer membrane lipoprotein Lpp" evidence="1">
    <location>
        <begin position="21"/>
        <end position="78"/>
    </location>
</feature>
<feature type="repeat" evidence="1">
    <location>
        <begin position="24"/>
        <end position="34"/>
    </location>
</feature>
<feature type="repeat" evidence="1">
    <location>
        <begin position="38"/>
        <end position="48"/>
    </location>
</feature>
<feature type="coiled-coil region" evidence="1">
    <location>
        <begin position="27"/>
        <end position="75"/>
    </location>
</feature>
<feature type="modified residue" description="N6-murein peptidoglycan lysine" evidence="1">
    <location>
        <position position="78"/>
    </location>
</feature>
<feature type="lipid moiety-binding region" description="N-palmitoyl cysteine" evidence="1">
    <location>
        <position position="21"/>
    </location>
</feature>
<feature type="lipid moiety-binding region" description="S-diacylglycerol cysteine" evidence="1">
    <location>
        <position position="21"/>
    </location>
</feature>
<evidence type="ECO:0000255" key="1">
    <source>
        <dbReference type="HAMAP-Rule" id="MF_00843"/>
    </source>
</evidence>
<sequence length="78" mass="8323">MKATKLVLGAVILGSTLLAGCSSNAKIDQLSSDVQTLNAKVDQLSNDVNAMRSDVQAAKDDAARANQRLDNMATKYRK</sequence>
<proteinExistence type="inferred from homology"/>
<protein>
    <recommendedName>
        <fullName evidence="1">Major outer membrane lipoprotein Lpp</fullName>
    </recommendedName>
    <alternativeName>
        <fullName evidence="1">Braun lipoprotein</fullName>
        <shortName evidence="1">BLP</shortName>
    </alternativeName>
    <alternativeName>
        <fullName evidence="1">Murein lipoprotein</fullName>
    </alternativeName>
</protein>
<accession>P69778</accession>
<accession>P02937</accession>
<organism>
    <name type="scientific">Escherichia coli O157:H7</name>
    <dbReference type="NCBI Taxonomy" id="83334"/>
    <lineage>
        <taxon>Bacteria</taxon>
        <taxon>Pseudomonadati</taxon>
        <taxon>Pseudomonadota</taxon>
        <taxon>Gammaproteobacteria</taxon>
        <taxon>Enterobacterales</taxon>
        <taxon>Enterobacteriaceae</taxon>
        <taxon>Escherichia</taxon>
    </lineage>
</organism>
<name>LPP_ECO57</name>